<feature type="chain" id="PRO_0000438362" description="ESX-1 secretion-associated protein EspG1">
    <location>
        <begin position="1"/>
        <end position="282"/>
    </location>
</feature>
<organism>
    <name type="scientific">Mycolicibacterium smegmatis (strain MKD8)</name>
    <name type="common">Mycobacterium smegmatis</name>
    <dbReference type="NCBI Taxonomy" id="1214915"/>
    <lineage>
        <taxon>Bacteria</taxon>
        <taxon>Bacillati</taxon>
        <taxon>Actinomycetota</taxon>
        <taxon>Actinomycetes</taxon>
        <taxon>Mycobacteriales</taxon>
        <taxon>Mycobacteriaceae</taxon>
        <taxon>Mycolicibacterium</taxon>
    </lineage>
</organism>
<accession>L8FPI5</accession>
<accession>A0A2U9PH61</accession>
<reference key="1">
    <citation type="journal article" date="2013" name="Genome Announc.">
        <title>Draft genome sequence of MKD8, a conjugal recipient Mycobacterium smegmatis strain.</title>
        <authorList>
            <person name="Gray T.A."/>
            <person name="Palumbo M.J."/>
            <person name="Derbyshire K.M."/>
        </authorList>
    </citation>
    <scope>NUCLEOTIDE SEQUENCE [LARGE SCALE GENOMIC DNA]</scope>
    <source>
        <strain>MKD8</strain>
    </source>
</reference>
<reference key="2">
    <citation type="submission" date="2018-03" db="EMBL/GenBank/DDBJ databases">
        <authorList>
            <person name="Derbyshire K."/>
            <person name="Gray T.A."/>
            <person name="Champion M."/>
        </authorList>
    </citation>
    <scope>NUCLEOTIDE SEQUENCE [LARGE SCALE GENOMIC DNA]</scope>
    <source>
        <strain>MKD8</strain>
    </source>
</reference>
<reference key="3">
    <citation type="journal article" date="2008" name="Mol. Microbiol.">
        <title>The specialized secretory apparatus ESX-1 is essential for DNA transfer in Mycobacterium smegmatis.</title>
        <authorList>
            <person name="Coros A."/>
            <person name="Callahan B."/>
            <person name="Battaglioli E."/>
            <person name="Derbyshire K.M."/>
        </authorList>
    </citation>
    <scope>FUNCTION</scope>
    <scope>DISRUPTION PHENOTYPE</scope>
    <source>
        <strain>MKD8</strain>
    </source>
</reference>
<protein>
    <recommendedName>
        <fullName>ESX-1 secretion-associated protein EspG1</fullName>
    </recommendedName>
</protein>
<name>ESPG1_MYCSE</name>
<proteinExistence type="inferred from homology"/>
<dbReference type="EMBL" id="CP027541">
    <property type="protein sequence ID" value="AWT51048.1"/>
    <property type="molecule type" value="Genomic_DNA"/>
</dbReference>
<dbReference type="RefSeq" id="WP_003891384.1">
    <property type="nucleotide sequence ID" value="NZ_CP027541.1"/>
</dbReference>
<dbReference type="SMR" id="L8FPI5"/>
<dbReference type="PATRIC" id="fig|1214915.3.peg.57"/>
<dbReference type="HOGENOM" id="CLU_073321_1_0_11"/>
<dbReference type="Proteomes" id="UP000011200">
    <property type="component" value="Chromosome"/>
</dbReference>
<dbReference type="GO" id="GO:0005737">
    <property type="term" value="C:cytoplasm"/>
    <property type="evidence" value="ECO:0007669"/>
    <property type="project" value="UniProtKB-SubCell"/>
</dbReference>
<dbReference type="InterPro" id="IPR025734">
    <property type="entry name" value="EspG"/>
</dbReference>
<dbReference type="Pfam" id="PF14011">
    <property type="entry name" value="ESX-1_EspG"/>
    <property type="match status" value="1"/>
</dbReference>
<comment type="function">
    <text evidence="1 3">Part of the ESX-1 / type VII specialized secretion system (T7SS), which exports several proteins including EsxA and EsxB (By similarity). Specific chaperone for cognate PE/PPE proteins, plays an important role in preventing aggregation of PE/PPE dimers (By similarity). Also plays a role in DNA conjugation, in at least recipient strain (PubMed:18554329).</text>
</comment>
<comment type="subunit">
    <text evidence="1">Interacts specifically with ESX-1-dependent PE/PPE proteins (By similarity).</text>
</comment>
<comment type="subcellular location">
    <subcellularLocation>
        <location evidence="2">Cytoplasm</location>
    </subcellularLocation>
</comment>
<comment type="disruption phenotype">
    <text evidence="3">Loss of DNA conjugation when disrupted in recipient strain, strain does not secrete EsxB (PubMed:18554329).</text>
</comment>
<comment type="miscellaneous">
    <text evidence="6">DNA conjugation in M.smegmatis is unidirectional with distinct donor and recipient strains; mc(2)155 is a donor strain while MKD8 is a recipient strain. Mutations in a donor strain that alter DNA transfer do not always alter DNA transfer in a recipient strain.</text>
</comment>
<comment type="similarity">
    <text evidence="5">Belongs to the EspG family.</text>
</comment>
<gene>
    <name type="primary">espG1</name>
    <name evidence="4" type="ORF">0057</name>
    <name evidence="7" type="ORF">D806_000540</name>
    <name type="ORF">D806_0057</name>
</gene>
<evidence type="ECO:0000250" key="1">
    <source>
        <dbReference type="UniProtKB" id="B2HMS9"/>
    </source>
</evidence>
<evidence type="ECO:0000250" key="2">
    <source>
        <dbReference type="UniProtKB" id="B2HSU5"/>
    </source>
</evidence>
<evidence type="ECO:0000269" key="3">
    <source>
    </source>
</evidence>
<evidence type="ECO:0000303" key="4">
    <source>
    </source>
</evidence>
<evidence type="ECO:0000305" key="5"/>
<evidence type="ECO:0000305" key="6">
    <source>
    </source>
</evidence>
<evidence type="ECO:0000312" key="7">
    <source>
        <dbReference type="EMBL" id="AWT51048.1"/>
    </source>
</evidence>
<sequence>MTAPFTAETGDAHIDDVVGVEVTIDGMLVIADKLGLTDFPPSMGIRLNIPQPDLRKVVWEQVERDLSAQGVLDVYGNPHPEVAAMVDTLARADRTLECRWWRRDAGGKMIRFVVCRKGGRHVVAARDNDLLVLQRVAPQIGLAGMVMTVLGEGSPANVEPLTGVADRLAQCRTAEELTGYGIPPTSARAYASIISEPDGWVEIVANERHPGGTTSQVDVAAGVLDAKQGRIVSIPRRVNGELYGSFLSGTKDNLERALEGLVEFLPSKTWFDKTDADNAYQH</sequence>
<keyword id="KW-0143">Chaperone</keyword>
<keyword id="KW-0963">Cytoplasm</keyword>